<gene>
    <name type="ordered locus">MIMI_R877</name>
</gene>
<name>YR877_MIMIV</name>
<protein>
    <recommendedName>
        <fullName>Putative lipocalin R877</fullName>
    </recommendedName>
</protein>
<comment type="function">
    <text evidence="3">Could play a role in the transport of a small ligand.</text>
</comment>
<comment type="subcellular location">
    <subcellularLocation>
        <location evidence="3">Secreted</location>
    </subcellularLocation>
    <subcellularLocation>
        <location evidence="2">Virion</location>
    </subcellularLocation>
</comment>
<comment type="similarity">
    <text evidence="3">Belongs to the calycin superfamily. Lipocalin family.</text>
</comment>
<organism>
    <name type="scientific">Acanthamoeba polyphaga mimivirus</name>
    <name type="common">APMV</name>
    <dbReference type="NCBI Taxonomy" id="212035"/>
    <lineage>
        <taxon>Viruses</taxon>
        <taxon>Varidnaviria</taxon>
        <taxon>Bamfordvirae</taxon>
        <taxon>Nucleocytoviricota</taxon>
        <taxon>Megaviricetes</taxon>
        <taxon>Imitervirales</taxon>
        <taxon>Mimiviridae</taxon>
        <taxon>Megamimivirinae</taxon>
        <taxon>Mimivirus</taxon>
        <taxon>Mimivirus bradfordmassiliense</taxon>
    </lineage>
</organism>
<reference key="1">
    <citation type="journal article" date="2004" name="Science">
        <title>The 1.2-megabase genome sequence of Mimivirus.</title>
        <authorList>
            <person name="Raoult D."/>
            <person name="Audic S."/>
            <person name="Robert C."/>
            <person name="Abergel C."/>
            <person name="Renesto P."/>
            <person name="Ogata H."/>
            <person name="La Scola B."/>
            <person name="Susan M."/>
            <person name="Claverie J.-M."/>
        </authorList>
    </citation>
    <scope>NUCLEOTIDE SEQUENCE [LARGE SCALE GENOMIC DNA]</scope>
    <source>
        <strain>Rowbotham-Bradford</strain>
    </source>
</reference>
<reference key="2">
    <citation type="journal article" date="2006" name="J. Virol.">
        <title>Mimivirus giant particles incorporate a large fraction of anonymous and unique gene products.</title>
        <authorList>
            <person name="Renesto P."/>
            <person name="Abergel C."/>
            <person name="Decloquement P."/>
            <person name="Moinier D."/>
            <person name="Azza S."/>
            <person name="Ogata H."/>
            <person name="Fourquet P."/>
            <person name="Gorvel J.-P."/>
            <person name="Claverie J.-M."/>
            <person name="Raoult D."/>
        </authorList>
    </citation>
    <scope>IDENTIFICATION BY MASS SPECTROMETRY [LARGE SCALE ANALYSIS]</scope>
    <scope>SUBCELLULAR LOCATION</scope>
</reference>
<sequence>MWIIILIVIIVIITIIFSKRDVVSQSSLDIQRYMGTWYEIARLPTSFQKGCVNSTANYQLLEPNKIQVTNNCEINGRINSVTGTAIPAANTRIVSGFLTPASLMVNFGYGFSPYNVIFIDENYQYAIVSGGNDTLWILSRFKNINQSTYNQLVTIVYNQGYDVNNLIRN</sequence>
<organismHost>
    <name type="scientific">Acanthamoeba polyphaga</name>
    <name type="common">Amoeba</name>
    <dbReference type="NCBI Taxonomy" id="5757"/>
</organismHost>
<keyword id="KW-1185">Reference proteome</keyword>
<keyword id="KW-0964">Secreted</keyword>
<keyword id="KW-0732">Signal</keyword>
<keyword id="KW-0813">Transport</keyword>
<keyword id="KW-0946">Virion</keyword>
<accession>Q5URA7</accession>
<evidence type="ECO:0000255" key="1"/>
<evidence type="ECO:0000269" key="2">
    <source>
    </source>
</evidence>
<evidence type="ECO:0000305" key="3"/>
<proteinExistence type="evidence at protein level"/>
<feature type="signal peptide" evidence="1">
    <location>
        <begin position="1"/>
        <end position="18"/>
    </location>
</feature>
<feature type="chain" id="PRO_0000041776" description="Putative lipocalin R877">
    <location>
        <begin position="19"/>
        <end position="169"/>
    </location>
</feature>
<dbReference type="EMBL" id="AY653733">
    <property type="protein sequence ID" value="AAV51135.1"/>
    <property type="molecule type" value="Genomic_DNA"/>
</dbReference>
<dbReference type="SMR" id="Q5URA7"/>
<dbReference type="KEGG" id="vg:9925544"/>
<dbReference type="OrthoDB" id="34259at10239"/>
<dbReference type="Proteomes" id="UP000001134">
    <property type="component" value="Genome"/>
</dbReference>
<dbReference type="GO" id="GO:0005576">
    <property type="term" value="C:extracellular region"/>
    <property type="evidence" value="ECO:0007669"/>
    <property type="project" value="UniProtKB-SubCell"/>
</dbReference>
<dbReference type="GO" id="GO:0044423">
    <property type="term" value="C:virion component"/>
    <property type="evidence" value="ECO:0007669"/>
    <property type="project" value="UniProtKB-KW"/>
</dbReference>
<dbReference type="GO" id="GO:0006950">
    <property type="term" value="P:response to stress"/>
    <property type="evidence" value="ECO:0007669"/>
    <property type="project" value="UniProtKB-ARBA"/>
</dbReference>
<dbReference type="CDD" id="cd19438">
    <property type="entry name" value="lipocalin_Blc-like"/>
    <property type="match status" value="1"/>
</dbReference>
<dbReference type="Gene3D" id="2.40.128.20">
    <property type="match status" value="1"/>
</dbReference>
<dbReference type="InterPro" id="IPR012674">
    <property type="entry name" value="Calycin"/>
</dbReference>
<dbReference type="InterPro" id="IPR022271">
    <property type="entry name" value="Lipocalin_ApoD"/>
</dbReference>
<dbReference type="InterPro" id="IPR002446">
    <property type="entry name" value="Lipocalin_bac"/>
</dbReference>
<dbReference type="InterPro" id="IPR047202">
    <property type="entry name" value="Lipocalin_Blc-like_dom"/>
</dbReference>
<dbReference type="InterPro" id="IPR022272">
    <property type="entry name" value="Lipocalin_CS"/>
</dbReference>
<dbReference type="InterPro" id="IPR000566">
    <property type="entry name" value="Lipocln_cytosolic_FA-bd_dom"/>
</dbReference>
<dbReference type="PANTHER" id="PTHR10612">
    <property type="entry name" value="APOLIPOPROTEIN D"/>
    <property type="match status" value="1"/>
</dbReference>
<dbReference type="PANTHER" id="PTHR10612:SF34">
    <property type="entry name" value="APOLIPOPROTEIN D"/>
    <property type="match status" value="1"/>
</dbReference>
<dbReference type="Pfam" id="PF08212">
    <property type="entry name" value="Lipocalin_2"/>
    <property type="match status" value="1"/>
</dbReference>
<dbReference type="PIRSF" id="PIRSF036893">
    <property type="entry name" value="Lipocalin_ApoD"/>
    <property type="match status" value="1"/>
</dbReference>
<dbReference type="PRINTS" id="PR01171">
    <property type="entry name" value="BCTLIPOCALIN"/>
</dbReference>
<dbReference type="SUPFAM" id="SSF50814">
    <property type="entry name" value="Lipocalins"/>
    <property type="match status" value="1"/>
</dbReference>
<dbReference type="PROSITE" id="PS00213">
    <property type="entry name" value="LIPOCALIN"/>
    <property type="match status" value="1"/>
</dbReference>